<proteinExistence type="inferred from homology"/>
<gene>
    <name type="ordered locus">PSPPH_0210</name>
</gene>
<sequence length="224" mass="25034">MSIRSWPAAERPRERLLELGAGSLSDAELLAIFLRTGVAGKSAVDLARHLLNQFDGLRSLLDADLSTFTSQLGLGPAKFAQLQAVMEMARRHMAESLRRDSALENPTQVRNYLKAQLRHEQHEVFACLFLDNKHRVMTFEILFRGTINASYVHPRQVVKRAMAHNAASLILCHNHPSGITTPSRSDIDLTKRLKEALMLVDVHVLDHVIVGDGEPLSMVERGLM</sequence>
<reference key="1">
    <citation type="journal article" date="2005" name="J. Bacteriol.">
        <title>Whole-genome sequence analysis of Pseudomonas syringae pv. phaseolicola 1448A reveals divergence among pathovars in genes involved in virulence and transposition.</title>
        <authorList>
            <person name="Joardar V."/>
            <person name="Lindeberg M."/>
            <person name="Jackson R.W."/>
            <person name="Selengut J."/>
            <person name="Dodson R."/>
            <person name="Brinkac L.M."/>
            <person name="Daugherty S.C."/>
            <person name="DeBoy R.T."/>
            <person name="Durkin A.S."/>
            <person name="Gwinn Giglio M."/>
            <person name="Madupu R."/>
            <person name="Nelson W.C."/>
            <person name="Rosovitz M.J."/>
            <person name="Sullivan S.A."/>
            <person name="Crabtree J."/>
            <person name="Creasy T."/>
            <person name="Davidsen T.M."/>
            <person name="Haft D.H."/>
            <person name="Zafar N."/>
            <person name="Zhou L."/>
            <person name="Halpin R."/>
            <person name="Holley T."/>
            <person name="Khouri H.M."/>
            <person name="Feldblyum T.V."/>
            <person name="White O."/>
            <person name="Fraser C.M."/>
            <person name="Chatterjee A.K."/>
            <person name="Cartinhour S."/>
            <person name="Schneider D."/>
            <person name="Mansfield J.W."/>
            <person name="Collmer A."/>
            <person name="Buell R."/>
        </authorList>
    </citation>
    <scope>NUCLEOTIDE SEQUENCE [LARGE SCALE GENOMIC DNA]</scope>
    <source>
        <strain>1448A / Race 6</strain>
    </source>
</reference>
<dbReference type="EMBL" id="CP000058">
    <property type="protein sequence ID" value="AAZ34699.1"/>
    <property type="molecule type" value="Genomic_DNA"/>
</dbReference>
<dbReference type="SMR" id="Q48Q04"/>
<dbReference type="KEGG" id="psp:PSPPH_0210"/>
<dbReference type="eggNOG" id="COG2003">
    <property type="taxonomic scope" value="Bacteria"/>
</dbReference>
<dbReference type="HOGENOM" id="CLU_073529_0_1_6"/>
<dbReference type="Proteomes" id="UP000000551">
    <property type="component" value="Chromosome"/>
</dbReference>
<dbReference type="GO" id="GO:0046872">
    <property type="term" value="F:metal ion binding"/>
    <property type="evidence" value="ECO:0007669"/>
    <property type="project" value="UniProtKB-KW"/>
</dbReference>
<dbReference type="GO" id="GO:0008237">
    <property type="term" value="F:metallopeptidase activity"/>
    <property type="evidence" value="ECO:0007669"/>
    <property type="project" value="UniProtKB-KW"/>
</dbReference>
<dbReference type="GO" id="GO:0006508">
    <property type="term" value="P:proteolysis"/>
    <property type="evidence" value="ECO:0007669"/>
    <property type="project" value="UniProtKB-KW"/>
</dbReference>
<dbReference type="CDD" id="cd08071">
    <property type="entry name" value="MPN_DUF2466"/>
    <property type="match status" value="1"/>
</dbReference>
<dbReference type="FunFam" id="3.40.140.10:FF:000032">
    <property type="entry name" value="DNA repair protein RadC"/>
    <property type="match status" value="1"/>
</dbReference>
<dbReference type="Gene3D" id="3.40.140.10">
    <property type="entry name" value="Cytidine Deaminase, domain 2"/>
    <property type="match status" value="1"/>
</dbReference>
<dbReference type="InterPro" id="IPR037518">
    <property type="entry name" value="MPN"/>
</dbReference>
<dbReference type="InterPro" id="IPR025657">
    <property type="entry name" value="RadC_JAB"/>
</dbReference>
<dbReference type="InterPro" id="IPR010994">
    <property type="entry name" value="RuvA_2-like"/>
</dbReference>
<dbReference type="InterPro" id="IPR001405">
    <property type="entry name" value="UPF0758"/>
</dbReference>
<dbReference type="InterPro" id="IPR020891">
    <property type="entry name" value="UPF0758_CS"/>
</dbReference>
<dbReference type="InterPro" id="IPR046778">
    <property type="entry name" value="UPF0758_N"/>
</dbReference>
<dbReference type="NCBIfam" id="NF000642">
    <property type="entry name" value="PRK00024.1"/>
    <property type="match status" value="1"/>
</dbReference>
<dbReference type="NCBIfam" id="TIGR00608">
    <property type="entry name" value="radc"/>
    <property type="match status" value="1"/>
</dbReference>
<dbReference type="PANTHER" id="PTHR30471">
    <property type="entry name" value="DNA REPAIR PROTEIN RADC"/>
    <property type="match status" value="1"/>
</dbReference>
<dbReference type="PANTHER" id="PTHR30471:SF3">
    <property type="entry name" value="UPF0758 PROTEIN YEES-RELATED"/>
    <property type="match status" value="1"/>
</dbReference>
<dbReference type="Pfam" id="PF04002">
    <property type="entry name" value="RadC"/>
    <property type="match status" value="1"/>
</dbReference>
<dbReference type="Pfam" id="PF20582">
    <property type="entry name" value="UPF0758_N"/>
    <property type="match status" value="1"/>
</dbReference>
<dbReference type="SUPFAM" id="SSF102712">
    <property type="entry name" value="JAB1/MPN domain"/>
    <property type="match status" value="1"/>
</dbReference>
<dbReference type="SUPFAM" id="SSF47781">
    <property type="entry name" value="RuvA domain 2-like"/>
    <property type="match status" value="1"/>
</dbReference>
<dbReference type="PROSITE" id="PS50249">
    <property type="entry name" value="MPN"/>
    <property type="match status" value="1"/>
</dbReference>
<dbReference type="PROSITE" id="PS01302">
    <property type="entry name" value="UPF0758"/>
    <property type="match status" value="1"/>
</dbReference>
<feature type="chain" id="PRO_1000001674" description="UPF0758 protein PSPPH_0210">
    <location>
        <begin position="1"/>
        <end position="224"/>
    </location>
</feature>
<feature type="domain" description="MPN" evidence="1">
    <location>
        <begin position="102"/>
        <end position="224"/>
    </location>
</feature>
<feature type="short sequence motif" description="JAMM motif" evidence="1">
    <location>
        <begin position="173"/>
        <end position="186"/>
    </location>
</feature>
<feature type="binding site" evidence="1">
    <location>
        <position position="173"/>
    </location>
    <ligand>
        <name>Zn(2+)</name>
        <dbReference type="ChEBI" id="CHEBI:29105"/>
        <note>catalytic</note>
    </ligand>
</feature>
<feature type="binding site" evidence="1">
    <location>
        <position position="175"/>
    </location>
    <ligand>
        <name>Zn(2+)</name>
        <dbReference type="ChEBI" id="CHEBI:29105"/>
        <note>catalytic</note>
    </ligand>
</feature>
<feature type="binding site" evidence="1">
    <location>
        <position position="186"/>
    </location>
    <ligand>
        <name>Zn(2+)</name>
        <dbReference type="ChEBI" id="CHEBI:29105"/>
        <note>catalytic</note>
    </ligand>
</feature>
<keyword id="KW-0378">Hydrolase</keyword>
<keyword id="KW-0479">Metal-binding</keyword>
<keyword id="KW-0482">Metalloprotease</keyword>
<keyword id="KW-0645">Protease</keyword>
<keyword id="KW-0862">Zinc</keyword>
<evidence type="ECO:0000255" key="1">
    <source>
        <dbReference type="PROSITE-ProRule" id="PRU01182"/>
    </source>
</evidence>
<evidence type="ECO:0000305" key="2"/>
<name>Y210_PSE14</name>
<protein>
    <recommendedName>
        <fullName>UPF0758 protein PSPPH_0210</fullName>
    </recommendedName>
</protein>
<accession>Q48Q04</accession>
<organism>
    <name type="scientific">Pseudomonas savastanoi pv. phaseolicola (strain 1448A / Race 6)</name>
    <name type="common">Pseudomonas syringae pv. phaseolicola (strain 1448A / Race 6)</name>
    <dbReference type="NCBI Taxonomy" id="264730"/>
    <lineage>
        <taxon>Bacteria</taxon>
        <taxon>Pseudomonadati</taxon>
        <taxon>Pseudomonadota</taxon>
        <taxon>Gammaproteobacteria</taxon>
        <taxon>Pseudomonadales</taxon>
        <taxon>Pseudomonadaceae</taxon>
        <taxon>Pseudomonas</taxon>
    </lineage>
</organism>
<comment type="similarity">
    <text evidence="2">Belongs to the UPF0758 family.</text>
</comment>